<organism>
    <name type="scientific">Xanthomonas oryzae pv. oryzae (strain MAFF 311018)</name>
    <dbReference type="NCBI Taxonomy" id="342109"/>
    <lineage>
        <taxon>Bacteria</taxon>
        <taxon>Pseudomonadati</taxon>
        <taxon>Pseudomonadota</taxon>
        <taxon>Gammaproteobacteria</taxon>
        <taxon>Lysobacterales</taxon>
        <taxon>Lysobacteraceae</taxon>
        <taxon>Xanthomonas</taxon>
    </lineage>
</organism>
<feature type="chain" id="PRO_0000266800" description="Small ribosomal subunit protein bS21">
    <location>
        <begin position="1"/>
        <end position="71"/>
    </location>
</feature>
<feature type="region of interest" description="Disordered" evidence="2">
    <location>
        <begin position="39"/>
        <end position="71"/>
    </location>
</feature>
<feature type="compositionally biased region" description="Basic residues" evidence="2">
    <location>
        <begin position="45"/>
        <end position="59"/>
    </location>
</feature>
<feature type="compositionally biased region" description="Basic and acidic residues" evidence="2">
    <location>
        <begin position="60"/>
        <end position="71"/>
    </location>
</feature>
<gene>
    <name evidence="1" type="primary">rpsU</name>
    <name type="ordered locus">XOO3902</name>
</gene>
<reference key="1">
    <citation type="journal article" date="2005" name="Jpn. Agric. Res. Q.">
        <title>Genome sequence of Xanthomonas oryzae pv. oryzae suggests contribution of large numbers of effector genes and insertion sequences to its race diversity.</title>
        <authorList>
            <person name="Ochiai H."/>
            <person name="Inoue Y."/>
            <person name="Takeya M."/>
            <person name="Sasaki A."/>
            <person name="Kaku H."/>
        </authorList>
    </citation>
    <scope>NUCLEOTIDE SEQUENCE [LARGE SCALE GENOMIC DNA]</scope>
    <source>
        <strain>MAFF 311018</strain>
    </source>
</reference>
<evidence type="ECO:0000255" key="1">
    <source>
        <dbReference type="HAMAP-Rule" id="MF_00358"/>
    </source>
</evidence>
<evidence type="ECO:0000256" key="2">
    <source>
        <dbReference type="SAM" id="MobiDB-lite"/>
    </source>
</evidence>
<evidence type="ECO:0000305" key="3"/>
<name>RS21_XANOM</name>
<sequence length="71" mass="8614">MPSVKVRENEPFEFALRRFKRTCEKAGVLAETRKREFYEKPTQERKRKAAAAVKRQLRRSSRDVTKRQRLY</sequence>
<comment type="similarity">
    <text evidence="1">Belongs to the bacterial ribosomal protein bS21 family.</text>
</comment>
<accession>Q2NYH0</accession>
<protein>
    <recommendedName>
        <fullName evidence="1">Small ribosomal subunit protein bS21</fullName>
    </recommendedName>
    <alternativeName>
        <fullName evidence="3">30S ribosomal protein S21</fullName>
    </alternativeName>
</protein>
<keyword id="KW-0687">Ribonucleoprotein</keyword>
<keyword id="KW-0689">Ribosomal protein</keyword>
<proteinExistence type="inferred from homology"/>
<dbReference type="EMBL" id="AP008229">
    <property type="protein sequence ID" value="BAE70657.1"/>
    <property type="molecule type" value="Genomic_DNA"/>
</dbReference>
<dbReference type="RefSeq" id="WP_002808376.1">
    <property type="nucleotide sequence ID" value="NC_007705.1"/>
</dbReference>
<dbReference type="SMR" id="Q2NYH0"/>
<dbReference type="GeneID" id="97512051"/>
<dbReference type="KEGG" id="xom:XOO3902"/>
<dbReference type="HOGENOM" id="CLU_159258_1_0_6"/>
<dbReference type="GO" id="GO:1990904">
    <property type="term" value="C:ribonucleoprotein complex"/>
    <property type="evidence" value="ECO:0007669"/>
    <property type="project" value="UniProtKB-KW"/>
</dbReference>
<dbReference type="GO" id="GO:0005840">
    <property type="term" value="C:ribosome"/>
    <property type="evidence" value="ECO:0007669"/>
    <property type="project" value="UniProtKB-KW"/>
</dbReference>
<dbReference type="GO" id="GO:0003735">
    <property type="term" value="F:structural constituent of ribosome"/>
    <property type="evidence" value="ECO:0007669"/>
    <property type="project" value="InterPro"/>
</dbReference>
<dbReference type="GO" id="GO:0006412">
    <property type="term" value="P:translation"/>
    <property type="evidence" value="ECO:0007669"/>
    <property type="project" value="UniProtKB-UniRule"/>
</dbReference>
<dbReference type="Gene3D" id="1.20.5.1150">
    <property type="entry name" value="Ribosomal protein S8"/>
    <property type="match status" value="1"/>
</dbReference>
<dbReference type="HAMAP" id="MF_00358">
    <property type="entry name" value="Ribosomal_bS21"/>
    <property type="match status" value="1"/>
</dbReference>
<dbReference type="InterPro" id="IPR001911">
    <property type="entry name" value="Ribosomal_bS21"/>
</dbReference>
<dbReference type="InterPro" id="IPR018278">
    <property type="entry name" value="Ribosomal_bS21_CS"/>
</dbReference>
<dbReference type="InterPro" id="IPR038380">
    <property type="entry name" value="Ribosomal_bS21_sf"/>
</dbReference>
<dbReference type="NCBIfam" id="TIGR00030">
    <property type="entry name" value="S21p"/>
    <property type="match status" value="1"/>
</dbReference>
<dbReference type="PANTHER" id="PTHR21109">
    <property type="entry name" value="MITOCHONDRIAL 28S RIBOSOMAL PROTEIN S21"/>
    <property type="match status" value="1"/>
</dbReference>
<dbReference type="PANTHER" id="PTHR21109:SF22">
    <property type="entry name" value="SMALL RIBOSOMAL SUBUNIT PROTEIN BS21"/>
    <property type="match status" value="1"/>
</dbReference>
<dbReference type="Pfam" id="PF01165">
    <property type="entry name" value="Ribosomal_S21"/>
    <property type="match status" value="1"/>
</dbReference>
<dbReference type="PRINTS" id="PR00976">
    <property type="entry name" value="RIBOSOMALS21"/>
</dbReference>
<dbReference type="PROSITE" id="PS01181">
    <property type="entry name" value="RIBOSOMAL_S21"/>
    <property type="match status" value="1"/>
</dbReference>